<comment type="function">
    <text evidence="4 5 6 7 8 9 10">Part of the outer membrane protein assembly complex (Bam), which is involved in assembly and insertion of beta-barrel proteins into the outer membrane. Nonessential member of the complex, which may orient the flexible periplasmic domain of BamA for interaction with other Bam components, chaperones and nascent outer membrane proteins. Efficient substrate folding and insertion into the outer membrane requires all 5 subunits (PubMed:20378773, PubMed:21823654, PubMed:27686148). A lateral gate may open between the first and last strands of the BamA beta-barrel that allows substrate to insert into the outer membrane; comparison of the structures of complete and nearly complete Bam complexes show there is considerable movement of all 5 proteins (PubMed:26900875, PubMed:26901871, PubMed:27686148).</text>
</comment>
<comment type="subunit">
    <text evidence="2 3 4 5 6 7 8 9 10">Part of the Bam complex, which is composed of the outer membrane protein BamA, and four lipoproteins BamB, BamC, BamD and BamE. Monomer. Interacts directly with BamA. The Bam complex has the shape of a hat, with the BamA beta-barrel crown in the outer membrane and the periplasmic brim formed by the BamA POTRA domains and the 4 lipoproteins (PubMed:26900875, PubMed:26901871, PubMed:27686148).</text>
</comment>
<comment type="interaction">
    <interactant intactId="EBI-907297">
        <id>P77774</id>
    </interactant>
    <interactant intactId="EBI-907371">
        <id>P0A940</id>
        <label>bamA</label>
    </interactant>
    <organismsDiffer>false</organismsDiffer>
    <experiments>23</experiments>
</comment>
<comment type="interaction">
    <interactant intactId="EBI-907297">
        <id>P77774</id>
    </interactant>
    <interactant intactId="EBI-907297">
        <id>P77774</id>
        <label>bamB</label>
    </interactant>
    <organismsDiffer>false</organismsDiffer>
    <experiments>2</experiments>
</comment>
<comment type="interaction">
    <interactant intactId="EBI-907297">
        <id>P77774</id>
    </interactant>
    <interactant intactId="EBI-558651">
        <id>P0ABZ6</id>
        <label>surA</label>
    </interactant>
    <organismsDiffer>false</organismsDiffer>
    <experiments>2</experiments>
</comment>
<comment type="subcellular location">
    <subcellularLocation>
        <location evidence="1 2 8 9">Cell outer membrane</location>
        <topology evidence="1 2 10">Lipid-anchor</topology>
    </subcellularLocation>
</comment>
<comment type="mass spectrometry">
    <text>With 3 palmitic acid (C16) acyl chains.</text>
</comment>
<comment type="mass spectrometry">
    <text>With 2 palmitic (C16) and 1 stearic (C18) acid acyl chains.</text>
</comment>
<comment type="similarity">
    <text evidence="1">Belongs to the BamB family.</text>
</comment>
<protein>
    <recommendedName>
        <fullName evidence="1">Outer membrane protein assembly factor BamB</fullName>
    </recommendedName>
</protein>
<feature type="signal peptide" evidence="1">
    <location>
        <begin position="1"/>
        <end position="19"/>
    </location>
</feature>
<feature type="chain" id="PRO_0000042211" description="Outer membrane protein assembly factor BamB">
    <location>
        <begin position="20"/>
        <end position="392"/>
    </location>
</feature>
<feature type="lipid moiety-binding region" description="N-palmitoyl cysteine" evidence="11">
    <location>
        <position position="20"/>
    </location>
</feature>
<feature type="lipid moiety-binding region" description="S-diacylglycerol cysteine" evidence="11">
    <location>
        <position position="20"/>
    </location>
</feature>
<feature type="helix" evidence="24">
    <location>
        <begin position="22"/>
        <end position="26"/>
    </location>
</feature>
<feature type="strand" evidence="30">
    <location>
        <begin position="28"/>
        <end position="30"/>
    </location>
</feature>
<feature type="strand" evidence="22">
    <location>
        <begin position="45"/>
        <end position="50"/>
    </location>
</feature>
<feature type="turn" evidence="22">
    <location>
        <begin position="53"/>
        <end position="58"/>
    </location>
</feature>
<feature type="strand" evidence="22">
    <location>
        <begin position="66"/>
        <end position="68"/>
    </location>
</feature>
<feature type="strand" evidence="22">
    <location>
        <begin position="71"/>
        <end position="75"/>
    </location>
</feature>
<feature type="strand" evidence="22">
    <location>
        <begin position="79"/>
        <end position="85"/>
    </location>
</feature>
<feature type="turn" evidence="22">
    <location>
        <begin position="86"/>
        <end position="88"/>
    </location>
</feature>
<feature type="strand" evidence="22">
    <location>
        <begin position="91"/>
        <end position="96"/>
    </location>
</feature>
<feature type="strand" evidence="23">
    <location>
        <begin position="99"/>
        <end position="105"/>
    </location>
</feature>
<feature type="strand" evidence="22">
    <location>
        <begin position="111"/>
        <end position="118"/>
    </location>
</feature>
<feature type="strand" evidence="22">
    <location>
        <begin position="121"/>
        <end position="126"/>
    </location>
</feature>
<feature type="strand" evidence="22">
    <location>
        <begin position="129"/>
        <end position="135"/>
    </location>
</feature>
<feature type="turn" evidence="22">
    <location>
        <begin position="136"/>
        <end position="138"/>
    </location>
</feature>
<feature type="strand" evidence="22">
    <location>
        <begin position="141"/>
        <end position="146"/>
    </location>
</feature>
<feature type="strand" evidence="22">
    <location>
        <begin position="156"/>
        <end position="158"/>
    </location>
</feature>
<feature type="strand" evidence="22">
    <location>
        <begin position="161"/>
        <end position="165"/>
    </location>
</feature>
<feature type="strand" evidence="22">
    <location>
        <begin position="169"/>
        <end position="175"/>
    </location>
</feature>
<feature type="turn" evidence="22">
    <location>
        <begin position="176"/>
        <end position="178"/>
    </location>
</feature>
<feature type="strand" evidence="22">
    <location>
        <begin position="181"/>
        <end position="186"/>
    </location>
</feature>
<feature type="strand" evidence="25">
    <location>
        <begin position="191"/>
        <end position="195"/>
    </location>
</feature>
<feature type="strand" evidence="22">
    <location>
        <begin position="201"/>
        <end position="203"/>
    </location>
</feature>
<feature type="strand" evidence="22">
    <location>
        <begin position="206"/>
        <end position="209"/>
    </location>
</feature>
<feature type="turn" evidence="22">
    <location>
        <begin position="212"/>
        <end position="214"/>
    </location>
</feature>
<feature type="strand" evidence="22">
    <location>
        <begin position="215"/>
        <end position="220"/>
    </location>
</feature>
<feature type="turn" evidence="22">
    <location>
        <begin position="221"/>
        <end position="223"/>
    </location>
</feature>
<feature type="strand" evidence="22">
    <location>
        <begin position="226"/>
        <end position="231"/>
    </location>
</feature>
<feature type="strand" evidence="26">
    <location>
        <begin position="237"/>
        <end position="239"/>
    </location>
</feature>
<feature type="strand" evidence="29">
    <location>
        <begin position="240"/>
        <end position="242"/>
    </location>
</feature>
<feature type="strand" evidence="22">
    <location>
        <begin position="252"/>
        <end position="254"/>
    </location>
</feature>
<feature type="strand" evidence="22">
    <location>
        <begin position="257"/>
        <end position="261"/>
    </location>
</feature>
<feature type="strand" evidence="28">
    <location>
        <begin position="263"/>
        <end position="265"/>
    </location>
</feature>
<feature type="strand" evidence="22">
    <location>
        <begin position="267"/>
        <end position="271"/>
    </location>
</feature>
<feature type="turn" evidence="22">
    <location>
        <begin position="272"/>
        <end position="274"/>
    </location>
</feature>
<feature type="strand" evidence="22">
    <location>
        <begin position="277"/>
        <end position="281"/>
    </location>
</feature>
<feature type="strand" evidence="22">
    <location>
        <begin position="286"/>
        <end position="292"/>
    </location>
</feature>
<feature type="strand" evidence="22">
    <location>
        <begin position="295"/>
        <end position="300"/>
    </location>
</feature>
<feature type="turn" evidence="27">
    <location>
        <begin position="301"/>
        <end position="303"/>
    </location>
</feature>
<feature type="strand" evidence="22">
    <location>
        <begin position="305"/>
        <end position="309"/>
    </location>
</feature>
<feature type="turn" evidence="22">
    <location>
        <begin position="310"/>
        <end position="312"/>
    </location>
</feature>
<feature type="strand" evidence="22">
    <location>
        <begin position="315"/>
        <end position="319"/>
    </location>
</feature>
<feature type="turn" evidence="22">
    <location>
        <begin position="321"/>
        <end position="324"/>
    </location>
</feature>
<feature type="strand" evidence="22">
    <location>
        <begin position="331"/>
        <end position="333"/>
    </location>
</feature>
<feature type="strand" evidence="22">
    <location>
        <begin position="336"/>
        <end position="340"/>
    </location>
</feature>
<feature type="strand" evidence="22">
    <location>
        <begin position="344"/>
        <end position="350"/>
    </location>
</feature>
<feature type="turn" evidence="22">
    <location>
        <begin position="351"/>
        <end position="353"/>
    </location>
</feature>
<feature type="strand" evidence="22">
    <location>
        <begin position="356"/>
        <end position="361"/>
    </location>
</feature>
<feature type="strand" evidence="22">
    <location>
        <begin position="372"/>
        <end position="374"/>
    </location>
</feature>
<feature type="strand" evidence="22">
    <location>
        <begin position="377"/>
        <end position="381"/>
    </location>
</feature>
<feature type="strand" evidence="21">
    <location>
        <begin position="383"/>
        <end position="385"/>
    </location>
</feature>
<feature type="strand" evidence="22">
    <location>
        <begin position="387"/>
        <end position="391"/>
    </location>
</feature>
<name>BAMB_ECOLI</name>
<evidence type="ECO:0000255" key="1">
    <source>
        <dbReference type="HAMAP-Rule" id="MF_00923"/>
    </source>
</evidence>
<evidence type="ECO:0000269" key="2">
    <source>
    </source>
</evidence>
<evidence type="ECO:0000269" key="3">
    <source>
    </source>
</evidence>
<evidence type="ECO:0000269" key="4">
    <source>
    </source>
</evidence>
<evidence type="ECO:0000269" key="5">
    <source>
    </source>
</evidence>
<evidence type="ECO:0000269" key="6">
    <source>
    </source>
</evidence>
<evidence type="ECO:0000269" key="7">
    <source>
    </source>
</evidence>
<evidence type="ECO:0000269" key="8">
    <source>
    </source>
</evidence>
<evidence type="ECO:0000269" key="9">
    <source>
    </source>
</evidence>
<evidence type="ECO:0000269" key="10">
    <source>
    </source>
</evidence>
<evidence type="ECO:0000305" key="11">
    <source>
    </source>
</evidence>
<evidence type="ECO:0007744" key="12">
    <source>
        <dbReference type="PDB" id="2YH3"/>
    </source>
</evidence>
<evidence type="ECO:0007744" key="13">
    <source>
        <dbReference type="PDB" id="3P1L"/>
    </source>
</evidence>
<evidence type="ECO:0007744" key="14">
    <source>
        <dbReference type="PDB" id="3PRW"/>
    </source>
</evidence>
<evidence type="ECO:0007744" key="15">
    <source>
        <dbReference type="PDB" id="3Q7M"/>
    </source>
</evidence>
<evidence type="ECO:0007744" key="16">
    <source>
        <dbReference type="PDB" id="3Q7N"/>
    </source>
</evidence>
<evidence type="ECO:0007744" key="17">
    <source>
        <dbReference type="PDB" id="3Q7O"/>
    </source>
</evidence>
<evidence type="ECO:0007744" key="18">
    <source>
        <dbReference type="PDB" id="5AYW"/>
    </source>
</evidence>
<evidence type="ECO:0007744" key="19">
    <source>
        <dbReference type="PDB" id="5D0O"/>
    </source>
</evidence>
<evidence type="ECO:0007744" key="20">
    <source>
        <dbReference type="PDB" id="5LJO"/>
    </source>
</evidence>
<evidence type="ECO:0007829" key="21">
    <source>
        <dbReference type="PDB" id="2YH3"/>
    </source>
</evidence>
<evidence type="ECO:0007829" key="22">
    <source>
        <dbReference type="PDB" id="3Q7M"/>
    </source>
</evidence>
<evidence type="ECO:0007829" key="23">
    <source>
        <dbReference type="PDB" id="3Q7N"/>
    </source>
</evidence>
<evidence type="ECO:0007829" key="24">
    <source>
        <dbReference type="PDB" id="3Q7O"/>
    </source>
</evidence>
<evidence type="ECO:0007829" key="25">
    <source>
        <dbReference type="PDB" id="4XGA"/>
    </source>
</evidence>
<evidence type="ECO:0007829" key="26">
    <source>
        <dbReference type="PDB" id="6LYQ"/>
    </source>
</evidence>
<evidence type="ECO:0007829" key="27">
    <source>
        <dbReference type="PDB" id="8BNZ"/>
    </source>
</evidence>
<evidence type="ECO:0007829" key="28">
    <source>
        <dbReference type="PDB" id="8BO2"/>
    </source>
</evidence>
<evidence type="ECO:0007829" key="29">
    <source>
        <dbReference type="PDB" id="8BVQ"/>
    </source>
</evidence>
<evidence type="ECO:0007829" key="30">
    <source>
        <dbReference type="PDB" id="8QN4"/>
    </source>
</evidence>
<organism>
    <name type="scientific">Escherichia coli (strain K12)</name>
    <dbReference type="NCBI Taxonomy" id="83333"/>
    <lineage>
        <taxon>Bacteria</taxon>
        <taxon>Pseudomonadati</taxon>
        <taxon>Pseudomonadota</taxon>
        <taxon>Gammaproteobacteria</taxon>
        <taxon>Enterobacterales</taxon>
        <taxon>Enterobacteriaceae</taxon>
        <taxon>Escherichia</taxon>
    </lineage>
</organism>
<gene>
    <name evidence="1" type="primary">bamB</name>
    <name type="synonym">yfgL</name>
    <name type="ordered locus">b2512</name>
    <name type="ordered locus">JW2496</name>
</gene>
<accession>P77774</accession>
<reference key="1">
    <citation type="journal article" date="1997" name="DNA Res.">
        <title>Construction of a contiguous 874-kb sequence of the Escherichia coli-K12 genome corresponding to 50.0-68.8 min on the linkage map and analysis of its sequence features.</title>
        <authorList>
            <person name="Yamamoto Y."/>
            <person name="Aiba H."/>
            <person name="Baba T."/>
            <person name="Hayashi K."/>
            <person name="Inada T."/>
            <person name="Isono K."/>
            <person name="Itoh T."/>
            <person name="Kimura S."/>
            <person name="Kitagawa M."/>
            <person name="Makino K."/>
            <person name="Miki T."/>
            <person name="Mitsuhashi N."/>
            <person name="Mizobuchi K."/>
            <person name="Mori H."/>
            <person name="Nakade S."/>
            <person name="Nakamura Y."/>
            <person name="Nashimoto H."/>
            <person name="Oshima T."/>
            <person name="Oyama S."/>
            <person name="Saito N."/>
            <person name="Sampei G."/>
            <person name="Satoh Y."/>
            <person name="Sivasundaram S."/>
            <person name="Tagami H."/>
            <person name="Takahashi H."/>
            <person name="Takeda J."/>
            <person name="Takemoto K."/>
            <person name="Uehara K."/>
            <person name="Wada C."/>
            <person name="Yamagata S."/>
            <person name="Horiuchi T."/>
        </authorList>
    </citation>
    <scope>NUCLEOTIDE SEQUENCE [LARGE SCALE GENOMIC DNA]</scope>
    <source>
        <strain>K12 / W3110 / ATCC 27325 / DSM 5911</strain>
    </source>
</reference>
<reference key="2">
    <citation type="journal article" date="1997" name="Science">
        <title>The complete genome sequence of Escherichia coli K-12.</title>
        <authorList>
            <person name="Blattner F.R."/>
            <person name="Plunkett G. III"/>
            <person name="Bloch C.A."/>
            <person name="Perna N.T."/>
            <person name="Burland V."/>
            <person name="Riley M."/>
            <person name="Collado-Vides J."/>
            <person name="Glasner J.D."/>
            <person name="Rode C.K."/>
            <person name="Mayhew G.F."/>
            <person name="Gregor J."/>
            <person name="Davis N.W."/>
            <person name="Kirkpatrick H.A."/>
            <person name="Goeden M.A."/>
            <person name="Rose D.J."/>
            <person name="Mau B."/>
            <person name="Shao Y."/>
        </authorList>
    </citation>
    <scope>NUCLEOTIDE SEQUENCE [LARGE SCALE GENOMIC DNA]</scope>
    <source>
        <strain>K12 / MG1655 / ATCC 47076</strain>
    </source>
</reference>
<reference key="3">
    <citation type="journal article" date="2006" name="Mol. Syst. Biol.">
        <title>Highly accurate genome sequences of Escherichia coli K-12 strains MG1655 and W3110.</title>
        <authorList>
            <person name="Hayashi K."/>
            <person name="Morooka N."/>
            <person name="Yamamoto Y."/>
            <person name="Fujita K."/>
            <person name="Isono K."/>
            <person name="Choi S."/>
            <person name="Ohtsubo E."/>
            <person name="Baba T."/>
            <person name="Wanner B.L."/>
            <person name="Mori H."/>
            <person name="Horiuchi T."/>
        </authorList>
    </citation>
    <scope>NUCLEOTIDE SEQUENCE [LARGE SCALE GENOMIC DNA]</scope>
    <source>
        <strain>K12 / W3110 / ATCC 27325 / DSM 5911</strain>
    </source>
</reference>
<reference key="4">
    <citation type="journal article" date="2005" name="Cell">
        <title>Identification of a multicomponent complex required for outer membrane biogenesis in Escherichia coli.</title>
        <authorList>
            <person name="Wu T."/>
            <person name="Malinverni J."/>
            <person name="Ruiz N."/>
            <person name="Kim S."/>
            <person name="Silhavy T.J."/>
            <person name="Kahne D."/>
        </authorList>
    </citation>
    <scope>SUBUNIT</scope>
    <scope>SUBCELLULAR LOCATION</scope>
    <source>
        <strain>K12</strain>
    </source>
</reference>
<reference key="5">
    <citation type="journal article" date="2006" name="Mol. Microbiol.">
        <title>YfiO stabilizes the YaeT complex and is essential for outer membrane protein assembly in Escherichia coli.</title>
        <authorList>
            <person name="Malinverni J.C."/>
            <person name="Werner J."/>
            <person name="Kim S."/>
            <person name="Sklar J.G."/>
            <person name="Kahne D."/>
            <person name="Misra R."/>
            <person name="Silhavy T.J."/>
        </authorList>
    </citation>
    <scope>SUBUNIT</scope>
    <scope>INTERACTION WITH BAMA</scope>
    <source>
        <strain>K12</strain>
    </source>
</reference>
<reference key="6">
    <citation type="journal article" date="2010" name="Science">
        <title>Reconstitution of outer membrane protein assembly from purified components.</title>
        <authorList>
            <person name="Hagan C.L."/>
            <person name="Kim S."/>
            <person name="Kahne D."/>
        </authorList>
    </citation>
    <scope>FUNCTION</scope>
    <scope>SUBUNIT</scope>
</reference>
<reference key="7">
    <citation type="journal article" date="2011" name="Biochemistry">
        <title>The reconstituted Escherichia coli Bam complex catalyzes multiple rounds of beta-barrel assembly.</title>
        <authorList>
            <person name="Hagan C.L."/>
            <person name="Kahne D."/>
        </authorList>
    </citation>
    <scope>FUNCTION</scope>
    <scope>SUBUNIT</scope>
</reference>
<reference evidence="14" key="8">
    <citation type="journal article" date="2011" name="J. Mol. Biol.">
        <title>Augmenting beta-augmentation: structural basis of how BamB binds BamA and may support folding of outer membrane proteins.</title>
        <authorList>
            <person name="Heuck A."/>
            <person name="Schleiffer A."/>
            <person name="Clausen T."/>
        </authorList>
    </citation>
    <scope>X-RAY CRYSTALLOGRAPHY (1.80 ANGSTROMS) OF 21-392</scope>
</reference>
<reference evidence="12" key="9">
    <citation type="journal article" date="2011" name="J. Biol. Chem.">
        <title>Structural basis of outer membrane protein biogenesis in bacteria.</title>
        <authorList>
            <person name="Albrecht R."/>
            <person name="Zeth K."/>
        </authorList>
    </citation>
    <scope>X-RAY CRYSTALLOGRAPHY (2.60 ANGSTROMS) OF 22-392</scope>
    <scope>INTERACTION WITH BAMA</scope>
    <scope>SUBUNIT</scope>
    <scope>FUNCTION</scope>
</reference>
<reference evidence="13" key="10">
    <citation type="journal article" date="2011" name="J. Mol. Biol.">
        <title>Crystal structure of Escherichia coli BamB, a lipoprotein component of the beta-barrel assembly machinery complex.</title>
        <authorList>
            <person name="Kim K.H."/>
            <person name="Paetzel M."/>
        </authorList>
    </citation>
    <scope>X-RAY CRYSTALLOGRAPHY (2.60 ANGSTROMS) OF 21-392</scope>
</reference>
<reference evidence="15 16 17" key="11">
    <citation type="journal article" date="2011" name="J. Mol. Biol.">
        <title>The crystal structure of BamB suggests interactions with BamA and its role within the BAM complex.</title>
        <authorList>
            <person name="Noinaj N."/>
            <person name="Fairman J.W."/>
            <person name="Buchanan S.K."/>
        </authorList>
    </citation>
    <scope>X-RAY CRYSTALLOGRAPHY (1.65 ANGSTROMS) OF 21-392</scope>
    <scope>FUNCTION</scope>
    <scope>SUBUNIT</scope>
</reference>
<reference evidence="20" key="12">
    <citation type="journal article" date="2016" name="Nat. Commun.">
        <title>Lateral opening in the intact beta-barrel assembly machinery captured by cryo-EM.</title>
        <authorList>
            <person name="Iadanza M.G."/>
            <person name="Higgins A.J."/>
            <person name="Schiffrin B."/>
            <person name="Calabrese A.N."/>
            <person name="Brockwell D.J."/>
            <person name="Ashcroft A.E."/>
            <person name="Radford S.E."/>
            <person name="Ranson N.A."/>
        </authorList>
    </citation>
    <scope>STRUCTURE BY ELECTRON MICROSCOPY (4.90 ANGSTROMS) OF 22-392 IN LATERAL OPEN BAM COMPLEX</scope>
    <scope>FUNCTION</scope>
    <scope>REACTION MECHANISM</scope>
    <scope>SUBUNIT</scope>
    <scope>MASS SPECTROMETRY</scope>
    <scope>DIACYLGLYCEROL AT CYS-20</scope>
    <scope>PALMITOYLATION AT CYS-20</scope>
</reference>
<reference evidence="18" key="13">
    <citation type="journal article" date="2016" name="Nat. Struct. Mol. Biol.">
        <title>Structure of the BAM complex and its implications for biogenesis of outer-membrane proteins.</title>
        <authorList>
            <person name="Han L."/>
            <person name="Zheng J."/>
            <person name="Wang Y."/>
            <person name="Yang X."/>
            <person name="Liu Y."/>
            <person name="Sun C."/>
            <person name="Cao B."/>
            <person name="Zhou H."/>
            <person name="Ni D."/>
            <person name="Lou J."/>
            <person name="Zhao Y."/>
            <person name="Huang Y."/>
        </authorList>
    </citation>
    <scope>X-RAY CRYSTALLOGRAPHY (3.56 ANGSTROMS) OF 20-392 IN LATERAL CLOSED BAM COMPLEX</scope>
    <scope>SUBUNIT</scope>
    <scope>SUBCELLULAR LOCATION</scope>
    <source>
        <strain>K12 / MG1655 / ATCC 47076</strain>
    </source>
</reference>
<reference evidence="19" key="14">
    <citation type="journal article" date="2016" name="Nature">
        <title>Structural basis of outer membrane protein insertion by the BAM complex.</title>
        <authorList>
            <person name="Gu Y."/>
            <person name="Li H."/>
            <person name="Dong H."/>
            <person name="Zeng Y."/>
            <person name="Zhang Z."/>
            <person name="Paterson N.G."/>
            <person name="Stansfeld P.J."/>
            <person name="Wang Z."/>
            <person name="Zhang Y."/>
            <person name="Wang W."/>
            <person name="Dong C."/>
        </authorList>
    </citation>
    <scope>X-RAY CRYSTALLOGRAPHY (2.90 ANGSTROMS) IN LATERAL CLOSED BAM COMPLEX</scope>
    <scope>REACTION MECHANISM</scope>
    <scope>SUBUNIT</scope>
    <scope>SUBCELLULAR LOCATION</scope>
</reference>
<sequence>MQLRKLLLPGLLSVTLLSGCSLFNSEEDVVKMSPLPTVENQFTPTTAWSTSVGSGIGNFYSNLHPALADNVVYAADRAGLVKALNADDGKEIWSVSLAEKDGWFSKEPALLSGGVTVSGGHVYIGSEKAQVYALNTSDGTVAWQTKVAGEALSRPVVSDGLVLIHTSNGQLQALNEADGAVKWTVNLDMPSLSLRGESAPTTAFGAAVVGGDNGRVSAVLMEQGQMIWQQRISQATGSTEIDRLSDVDTTPVVVNGVVFALAYNGNLTALDLRSGQIMWKRELGSVNDFIVDGNRIYLVDQNDRVMALTIDGGVTLWTQSDLLHRLLTSPVLYNGNLVVGDSEGYLHWINVEDGRFVAQQKVDSSGFQTEPVAADGKLLIQAKDGTVYSITR</sequence>
<keyword id="KW-0002">3D-structure</keyword>
<keyword id="KW-0998">Cell outer membrane</keyword>
<keyword id="KW-0449">Lipoprotein</keyword>
<keyword id="KW-0472">Membrane</keyword>
<keyword id="KW-0564">Palmitate</keyword>
<keyword id="KW-1185">Reference proteome</keyword>
<keyword id="KW-0732">Signal</keyword>
<dbReference type="EMBL" id="U00096">
    <property type="protein sequence ID" value="AAC75565.1"/>
    <property type="molecule type" value="Genomic_DNA"/>
</dbReference>
<dbReference type="EMBL" id="AP009048">
    <property type="protein sequence ID" value="BAA16398.1"/>
    <property type="molecule type" value="Genomic_DNA"/>
</dbReference>
<dbReference type="PIR" id="G65027">
    <property type="entry name" value="G65027"/>
</dbReference>
<dbReference type="RefSeq" id="NP_417007.1">
    <property type="nucleotide sequence ID" value="NC_000913.3"/>
</dbReference>
<dbReference type="RefSeq" id="WP_001177052.1">
    <property type="nucleotide sequence ID" value="NZ_LN832404.1"/>
</dbReference>
<dbReference type="PDB" id="2YH3">
    <property type="method" value="X-ray"/>
    <property type="resolution" value="2.60 A"/>
    <property type="chains" value="A=22-392"/>
</dbReference>
<dbReference type="PDB" id="2YMS">
    <property type="method" value="X-ray"/>
    <property type="resolution" value="2.10 A"/>
    <property type="chains" value="A=62-191, B=113-186, C=248-322, D=247-320"/>
</dbReference>
<dbReference type="PDB" id="3P1L">
    <property type="method" value="X-ray"/>
    <property type="resolution" value="2.60 A"/>
    <property type="chains" value="A=21-392"/>
</dbReference>
<dbReference type="PDB" id="3PRW">
    <property type="method" value="X-ray"/>
    <property type="resolution" value="1.80 A"/>
    <property type="chains" value="A=21-392"/>
</dbReference>
<dbReference type="PDB" id="3Q7M">
    <property type="method" value="X-ray"/>
    <property type="resolution" value="1.65 A"/>
    <property type="chains" value="A=21-392"/>
</dbReference>
<dbReference type="PDB" id="3Q7N">
    <property type="method" value="X-ray"/>
    <property type="resolution" value="1.77 A"/>
    <property type="chains" value="A=21-392"/>
</dbReference>
<dbReference type="PDB" id="3Q7O">
    <property type="method" value="X-ray"/>
    <property type="resolution" value="2.09 A"/>
    <property type="chains" value="A=21-392"/>
</dbReference>
<dbReference type="PDB" id="4PK1">
    <property type="method" value="X-ray"/>
    <property type="resolution" value="3.10 A"/>
    <property type="chains" value="A=21-392"/>
</dbReference>
<dbReference type="PDB" id="4XGA">
    <property type="method" value="X-ray"/>
    <property type="resolution" value="2.15 A"/>
    <property type="chains" value="A=20-392"/>
</dbReference>
<dbReference type="PDB" id="5AYW">
    <property type="method" value="X-ray"/>
    <property type="resolution" value="3.56 A"/>
    <property type="chains" value="B=20-392"/>
</dbReference>
<dbReference type="PDB" id="5D0O">
    <property type="method" value="X-ray"/>
    <property type="resolution" value="2.90 A"/>
    <property type="chains" value="B=1-392"/>
</dbReference>
<dbReference type="PDB" id="5LJO">
    <property type="method" value="EM"/>
    <property type="resolution" value="4.90 A"/>
    <property type="chains" value="B=22-392"/>
</dbReference>
<dbReference type="PDB" id="6LYQ">
    <property type="method" value="X-ray"/>
    <property type="resolution" value="3.19 A"/>
    <property type="chains" value="B=1-392"/>
</dbReference>
<dbReference type="PDB" id="6LYR">
    <property type="method" value="X-ray"/>
    <property type="resolution" value="3.28 A"/>
    <property type="chains" value="B=1-392"/>
</dbReference>
<dbReference type="PDB" id="6LYS">
    <property type="method" value="X-ray"/>
    <property type="resolution" value="3.05 A"/>
    <property type="chains" value="B=1-392"/>
</dbReference>
<dbReference type="PDB" id="6LYU">
    <property type="method" value="EM"/>
    <property type="resolution" value="4.20 A"/>
    <property type="chains" value="B=1-392"/>
</dbReference>
<dbReference type="PDB" id="6SMX">
    <property type="method" value="EM"/>
    <property type="resolution" value="6.65 A"/>
    <property type="chains" value="B=22-392"/>
</dbReference>
<dbReference type="PDB" id="6SN0">
    <property type="method" value="EM"/>
    <property type="resolution" value="10.80 A"/>
    <property type="chains" value="B=22-392"/>
</dbReference>
<dbReference type="PDB" id="6SN2">
    <property type="method" value="EM"/>
    <property type="resolution" value="9.50 A"/>
    <property type="chains" value="B=22-392"/>
</dbReference>
<dbReference type="PDB" id="6SN3">
    <property type="method" value="EM"/>
    <property type="resolution" value="8.40 A"/>
    <property type="chains" value="B=22-392"/>
</dbReference>
<dbReference type="PDB" id="6SN4">
    <property type="method" value="EM"/>
    <property type="resolution" value="9.50 A"/>
    <property type="chains" value="B=22-392"/>
</dbReference>
<dbReference type="PDB" id="6SN5">
    <property type="method" value="EM"/>
    <property type="resolution" value="9.80 A"/>
    <property type="chains" value="B=22-392"/>
</dbReference>
<dbReference type="PDB" id="6SN7">
    <property type="method" value="EM"/>
    <property type="resolution" value="8.90 A"/>
    <property type="chains" value="B=22-392"/>
</dbReference>
<dbReference type="PDB" id="6SN8">
    <property type="method" value="EM"/>
    <property type="resolution" value="8.40 A"/>
    <property type="chains" value="B=22-392"/>
</dbReference>
<dbReference type="PDB" id="6SN9">
    <property type="method" value="EM"/>
    <property type="resolution" value="9.80 A"/>
    <property type="chains" value="B=22-392"/>
</dbReference>
<dbReference type="PDB" id="6SO7">
    <property type="method" value="EM"/>
    <property type="resolution" value="10.50 A"/>
    <property type="chains" value="B=22-392"/>
</dbReference>
<dbReference type="PDB" id="6SO8">
    <property type="method" value="EM"/>
    <property type="resolution" value="9.80 A"/>
    <property type="chains" value="B=22-392"/>
</dbReference>
<dbReference type="PDB" id="6SOA">
    <property type="method" value="EM"/>
    <property type="resolution" value="10.80 A"/>
    <property type="chains" value="B=22-392"/>
</dbReference>
<dbReference type="PDB" id="6SOB">
    <property type="method" value="EM"/>
    <property type="resolution" value="8.50 A"/>
    <property type="chains" value="B=22-392"/>
</dbReference>
<dbReference type="PDB" id="6SOC">
    <property type="method" value="EM"/>
    <property type="resolution" value="9.00 A"/>
    <property type="chains" value="B=22-392"/>
</dbReference>
<dbReference type="PDB" id="6SOG">
    <property type="method" value="EM"/>
    <property type="resolution" value="8.30 A"/>
    <property type="chains" value="B=22-392"/>
</dbReference>
<dbReference type="PDB" id="6SOH">
    <property type="method" value="EM"/>
    <property type="resolution" value="9.50 A"/>
    <property type="chains" value="B=22-392"/>
</dbReference>
<dbReference type="PDB" id="6SOJ">
    <property type="method" value="EM"/>
    <property type="resolution" value="10.40 A"/>
    <property type="chains" value="B=22-392"/>
</dbReference>
<dbReference type="PDB" id="6V05">
    <property type="method" value="EM"/>
    <property type="resolution" value="4.10 A"/>
    <property type="chains" value="B=1-392"/>
</dbReference>
<dbReference type="PDB" id="7BNQ">
    <property type="method" value="EM"/>
    <property type="resolution" value="4.10 A"/>
    <property type="chains" value="B=1-392"/>
</dbReference>
<dbReference type="PDB" id="7NBX">
    <property type="method" value="EM"/>
    <property type="resolution" value="4.80 A"/>
    <property type="chains" value="B=1-392"/>
</dbReference>
<dbReference type="PDB" id="7NCS">
    <property type="method" value="EM"/>
    <property type="resolution" value="7.10 A"/>
    <property type="chains" value="B=1-392"/>
</dbReference>
<dbReference type="PDB" id="7ND0">
    <property type="method" value="EM"/>
    <property type="resolution" value="5.20 A"/>
    <property type="chains" value="B=1-392"/>
</dbReference>
<dbReference type="PDB" id="7NRI">
    <property type="method" value="EM"/>
    <property type="resolution" value="3.03 A"/>
    <property type="chains" value="B=20-392"/>
</dbReference>
<dbReference type="PDB" id="7R1W">
    <property type="method" value="EM"/>
    <property type="resolution" value="3.60 A"/>
    <property type="chains" value="B=1-392"/>
</dbReference>
<dbReference type="PDB" id="7RI4">
    <property type="method" value="EM"/>
    <property type="resolution" value="3.40 A"/>
    <property type="chains" value="B=22-392"/>
</dbReference>
<dbReference type="PDB" id="7RI5">
    <property type="method" value="EM"/>
    <property type="resolution" value="4.00 A"/>
    <property type="chains" value="B=1-392"/>
</dbReference>
<dbReference type="PDB" id="7RI6">
    <property type="method" value="EM"/>
    <property type="resolution" value="5.90 A"/>
    <property type="chains" value="B=1-392"/>
</dbReference>
<dbReference type="PDB" id="7RI7">
    <property type="method" value="EM"/>
    <property type="resolution" value="8.00 A"/>
    <property type="chains" value="B=1-392"/>
</dbReference>
<dbReference type="PDB" id="7RI9">
    <property type="method" value="EM"/>
    <property type="resolution" value="6.90 A"/>
    <property type="chains" value="B=1-392"/>
</dbReference>
<dbReference type="PDB" id="7RJ5">
    <property type="method" value="EM"/>
    <property type="resolution" value="7.00 A"/>
    <property type="chains" value="B=20-392"/>
</dbReference>
<dbReference type="PDB" id="7TSZ">
    <property type="method" value="EM"/>
    <property type="resolution" value="4.50 A"/>
    <property type="chains" value="B=20-392"/>
</dbReference>
<dbReference type="PDB" id="7TT1">
    <property type="method" value="EM"/>
    <property type="resolution" value="4.30 A"/>
    <property type="chains" value="B=20-392"/>
</dbReference>
<dbReference type="PDB" id="7TT2">
    <property type="method" value="EM"/>
    <property type="resolution" value="4.20 A"/>
    <property type="chains" value="B=20-392"/>
</dbReference>
<dbReference type="PDB" id="7TT3">
    <property type="method" value="EM"/>
    <property type="resolution" value="4.30 A"/>
    <property type="chains" value="B=20-392"/>
</dbReference>
<dbReference type="PDB" id="7TT4">
    <property type="method" value="EM"/>
    <property type="resolution" value="4.20 A"/>
    <property type="chains" value="B=20-392"/>
</dbReference>
<dbReference type="PDB" id="7TTC">
    <property type="method" value="EM"/>
    <property type="resolution" value="3.60 A"/>
    <property type="chains" value="B=20-392"/>
</dbReference>
<dbReference type="PDB" id="7YE4">
    <property type="method" value="EM"/>
    <property type="resolution" value="3.40 A"/>
    <property type="chains" value="B=1-392"/>
</dbReference>
<dbReference type="PDB" id="7YE6">
    <property type="method" value="EM"/>
    <property type="resolution" value="3.40 A"/>
    <property type="chains" value="B=1-392"/>
</dbReference>
<dbReference type="PDB" id="8ADG">
    <property type="method" value="EM"/>
    <property type="resolution" value="3.00 A"/>
    <property type="chains" value="B=1-392"/>
</dbReference>
<dbReference type="PDB" id="8ADI">
    <property type="method" value="EM"/>
    <property type="resolution" value="3.40 A"/>
    <property type="chains" value="B=1-392"/>
</dbReference>
<dbReference type="PDB" id="8BNZ">
    <property type="method" value="EM"/>
    <property type="resolution" value="3.50 A"/>
    <property type="chains" value="B=1-392"/>
</dbReference>
<dbReference type="PDB" id="8BO2">
    <property type="method" value="EM"/>
    <property type="resolution" value="3.10 A"/>
    <property type="chains" value="B=1-392"/>
</dbReference>
<dbReference type="PDB" id="8BVQ">
    <property type="method" value="EM"/>
    <property type="resolution" value="3.30 A"/>
    <property type="chains" value="B=20-392"/>
</dbReference>
<dbReference type="PDB" id="8BWC">
    <property type="method" value="EM"/>
    <property type="resolution" value="3.50 A"/>
    <property type="chains" value="B=20-392"/>
</dbReference>
<dbReference type="PDB" id="8PZ1">
    <property type="method" value="EM"/>
    <property type="resolution" value="4.10 A"/>
    <property type="chains" value="B=20-392"/>
</dbReference>
<dbReference type="PDB" id="8PZ2">
    <property type="method" value="EM"/>
    <property type="resolution" value="4.20 A"/>
    <property type="chains" value="B=20-392"/>
</dbReference>
<dbReference type="PDB" id="8PZU">
    <property type="method" value="EM"/>
    <property type="resolution" value="3.50 A"/>
    <property type="chains" value="B=20-392"/>
</dbReference>
<dbReference type="PDB" id="8PZV">
    <property type="method" value="EM"/>
    <property type="resolution" value="2.90 A"/>
    <property type="chains" value="B=20-392"/>
</dbReference>
<dbReference type="PDB" id="8Q0G">
    <property type="method" value="EM"/>
    <property type="resolution" value="4.30 A"/>
    <property type="chains" value="B=20-392"/>
</dbReference>
<dbReference type="PDB" id="8QN4">
    <property type="method" value="EM"/>
    <property type="resolution" value="3.36 A"/>
    <property type="chains" value="B=1-392"/>
</dbReference>
<dbReference type="PDB" id="8QP5">
    <property type="method" value="EM"/>
    <property type="resolution" value="4.40 A"/>
    <property type="chains" value="B=20-392"/>
</dbReference>
<dbReference type="PDB" id="8QPU">
    <property type="method" value="EM"/>
    <property type="resolution" value="5.20 A"/>
    <property type="chains" value="B=20-392"/>
</dbReference>
<dbReference type="PDB" id="8QPV">
    <property type="method" value="EM"/>
    <property type="resolution" value="4.00 A"/>
    <property type="chains" value="B=20-392"/>
</dbReference>
<dbReference type="PDB" id="8QPW">
    <property type="method" value="EM"/>
    <property type="resolution" value="5.30 A"/>
    <property type="chains" value="B=20-392"/>
</dbReference>
<dbReference type="PDB" id="8SPR">
    <property type="method" value="EM"/>
    <property type="resolution" value="3.90 A"/>
    <property type="chains" value="B=21-392"/>
</dbReference>
<dbReference type="PDB" id="8SQA">
    <property type="method" value="EM"/>
    <property type="resolution" value="4.20 A"/>
    <property type="chains" value="B=21-392"/>
</dbReference>
<dbReference type="PDB" id="8SQB">
    <property type="method" value="EM"/>
    <property type="resolution" value="3.80 A"/>
    <property type="chains" value="B=21-392"/>
</dbReference>
<dbReference type="PDB" id="9CNW">
    <property type="method" value="EM"/>
    <property type="resolution" value="2.60 A"/>
    <property type="chains" value="B=1-392"/>
</dbReference>
<dbReference type="PDB" id="9CNX">
    <property type="method" value="EM"/>
    <property type="resolution" value="3.55 A"/>
    <property type="chains" value="B=1-392"/>
</dbReference>
<dbReference type="PDB" id="9CNY">
    <property type="method" value="EM"/>
    <property type="resolution" value="4.00 A"/>
    <property type="chains" value="B=1-392"/>
</dbReference>
<dbReference type="PDB" id="9CNZ">
    <property type="method" value="EM"/>
    <property type="resolution" value="3.10 A"/>
    <property type="chains" value="B=1-392"/>
</dbReference>
<dbReference type="PDB" id="9CO0">
    <property type="method" value="EM"/>
    <property type="resolution" value="3.30 A"/>
    <property type="chains" value="B=1-392"/>
</dbReference>
<dbReference type="PDB" id="9HE1">
    <property type="method" value="EM"/>
    <property type="resolution" value="3.00 A"/>
    <property type="chains" value="B=1-392"/>
</dbReference>
<dbReference type="PDBsum" id="2YH3"/>
<dbReference type="PDBsum" id="2YMS"/>
<dbReference type="PDBsum" id="3P1L"/>
<dbReference type="PDBsum" id="3PRW"/>
<dbReference type="PDBsum" id="3Q7M"/>
<dbReference type="PDBsum" id="3Q7N"/>
<dbReference type="PDBsum" id="3Q7O"/>
<dbReference type="PDBsum" id="4PK1"/>
<dbReference type="PDBsum" id="4XGA"/>
<dbReference type="PDBsum" id="5AYW"/>
<dbReference type="PDBsum" id="5D0O"/>
<dbReference type="PDBsum" id="5LJO"/>
<dbReference type="PDBsum" id="6LYQ"/>
<dbReference type="PDBsum" id="6LYR"/>
<dbReference type="PDBsum" id="6LYS"/>
<dbReference type="PDBsum" id="6LYU"/>
<dbReference type="PDBsum" id="6SMX"/>
<dbReference type="PDBsum" id="6SN0"/>
<dbReference type="PDBsum" id="6SN2"/>
<dbReference type="PDBsum" id="6SN3"/>
<dbReference type="PDBsum" id="6SN4"/>
<dbReference type="PDBsum" id="6SN5"/>
<dbReference type="PDBsum" id="6SN7"/>
<dbReference type="PDBsum" id="6SN8"/>
<dbReference type="PDBsum" id="6SN9"/>
<dbReference type="PDBsum" id="6SO7"/>
<dbReference type="PDBsum" id="6SO8"/>
<dbReference type="PDBsum" id="6SOA"/>
<dbReference type="PDBsum" id="6SOB"/>
<dbReference type="PDBsum" id="6SOC"/>
<dbReference type="PDBsum" id="6SOG"/>
<dbReference type="PDBsum" id="6SOH"/>
<dbReference type="PDBsum" id="6SOJ"/>
<dbReference type="PDBsum" id="6V05"/>
<dbReference type="PDBsum" id="7BNQ"/>
<dbReference type="PDBsum" id="7NBX"/>
<dbReference type="PDBsum" id="7NCS"/>
<dbReference type="PDBsum" id="7ND0"/>
<dbReference type="PDBsum" id="7NRI"/>
<dbReference type="PDBsum" id="7R1W"/>
<dbReference type="PDBsum" id="7RI4"/>
<dbReference type="PDBsum" id="7RI5"/>
<dbReference type="PDBsum" id="7RI6"/>
<dbReference type="PDBsum" id="7RI7"/>
<dbReference type="PDBsum" id="7RI9"/>
<dbReference type="PDBsum" id="7RJ5"/>
<dbReference type="PDBsum" id="7TSZ"/>
<dbReference type="PDBsum" id="7TT1"/>
<dbReference type="PDBsum" id="7TT2"/>
<dbReference type="PDBsum" id="7TT3"/>
<dbReference type="PDBsum" id="7TT4"/>
<dbReference type="PDBsum" id="7TTC"/>
<dbReference type="PDBsum" id="7YE4"/>
<dbReference type="PDBsum" id="7YE6"/>
<dbReference type="PDBsum" id="8ADG"/>
<dbReference type="PDBsum" id="8ADI"/>
<dbReference type="PDBsum" id="8BNZ"/>
<dbReference type="PDBsum" id="8BO2"/>
<dbReference type="PDBsum" id="8BVQ"/>
<dbReference type="PDBsum" id="8BWC"/>
<dbReference type="PDBsum" id="8PZ1"/>
<dbReference type="PDBsum" id="8PZ2"/>
<dbReference type="PDBsum" id="8PZU"/>
<dbReference type="PDBsum" id="8PZV"/>
<dbReference type="PDBsum" id="8Q0G"/>
<dbReference type="PDBsum" id="8QN4"/>
<dbReference type="PDBsum" id="8QP5"/>
<dbReference type="PDBsum" id="8QPU"/>
<dbReference type="PDBsum" id="8QPV"/>
<dbReference type="PDBsum" id="8QPW"/>
<dbReference type="PDBsum" id="8SPR"/>
<dbReference type="PDBsum" id="8SQA"/>
<dbReference type="PDBsum" id="8SQB"/>
<dbReference type="PDBsum" id="9CNW"/>
<dbReference type="PDBsum" id="9CNX"/>
<dbReference type="PDBsum" id="9CNY"/>
<dbReference type="PDBsum" id="9CNZ"/>
<dbReference type="PDBsum" id="9CO0"/>
<dbReference type="PDBsum" id="9HE1"/>
<dbReference type="EMDB" id="EMD-12232"/>
<dbReference type="EMDB" id="EMD-12262"/>
<dbReference type="EMDB" id="EMD-12263"/>
<dbReference type="EMDB" id="EMD-12271"/>
<dbReference type="EMDB" id="EMD-12272"/>
<dbReference type="EMDB" id="EMD-12546"/>
<dbReference type="EMDB" id="EMD-14242"/>
<dbReference type="EMDB" id="EMD-15362"/>
<dbReference type="EMDB" id="EMD-15363"/>
<dbReference type="EMDB" id="EMD-16137"/>
<dbReference type="EMDB" id="EMD-16138"/>
<dbReference type="EMDB" id="EMD-16268"/>
<dbReference type="EMDB" id="EMD-16282"/>
<dbReference type="EMDB" id="EMD-18034"/>
<dbReference type="EMDB" id="EMD-18035"/>
<dbReference type="EMDB" id="EMD-18045"/>
<dbReference type="EMDB" id="EMD-18046"/>
<dbReference type="EMDB" id="EMD-18053"/>
<dbReference type="EMDB" id="EMD-18507"/>
<dbReference type="EMDB" id="EMD-18543"/>
<dbReference type="EMDB" id="EMD-18562"/>
<dbReference type="EMDB" id="EMD-18563"/>
<dbReference type="EMDB" id="EMD-18564"/>
<dbReference type="EMDB" id="EMD-20969"/>
<dbReference type="EMDB" id="EMD-26114"/>
<dbReference type="EMDB" id="EMD-30018"/>
<dbReference type="EMDB" id="EMD-33763"/>
<dbReference type="EMDB" id="EMD-33765"/>
<dbReference type="EMDB" id="EMD-4061"/>
<dbReference type="EMDB" id="EMD-40682"/>
<dbReference type="EMDB" id="EMD-40700"/>
<dbReference type="EMDB" id="EMD-40701"/>
<dbReference type="EMDB" id="EMD-45764"/>
<dbReference type="EMDB" id="EMD-45765"/>
<dbReference type="EMDB" id="EMD-45766"/>
<dbReference type="EMDB" id="EMD-45767"/>
<dbReference type="EMDB" id="EMD-45768"/>
<dbReference type="EMDB" id="EMD-52074"/>
<dbReference type="SMR" id="P77774"/>
<dbReference type="BioGRID" id="4260587">
    <property type="interactions" value="322"/>
</dbReference>
<dbReference type="ComplexPortal" id="CPX-1923">
    <property type="entry name" value="BAM complex"/>
</dbReference>
<dbReference type="DIP" id="DIP-12042N"/>
<dbReference type="FunCoup" id="P77774">
    <property type="interactions" value="105"/>
</dbReference>
<dbReference type="IntAct" id="P77774">
    <property type="interactions" value="9"/>
</dbReference>
<dbReference type="STRING" id="511145.b2512"/>
<dbReference type="TCDB" id="1.B.33.1.3">
    <property type="family name" value="the outer membrane protein insertion porin (bam complex) (ompip) family"/>
</dbReference>
<dbReference type="jPOST" id="P77774"/>
<dbReference type="PaxDb" id="511145-b2512"/>
<dbReference type="EnsemblBacteria" id="AAC75565">
    <property type="protein sequence ID" value="AAC75565"/>
    <property type="gene ID" value="b2512"/>
</dbReference>
<dbReference type="GeneID" id="946982"/>
<dbReference type="KEGG" id="ecj:JW2496"/>
<dbReference type="KEGG" id="eco:b2512"/>
<dbReference type="KEGG" id="ecoc:C3026_13930"/>
<dbReference type="PATRIC" id="fig|1411691.4.peg.4224"/>
<dbReference type="EchoBASE" id="EB3960"/>
<dbReference type="eggNOG" id="COG1520">
    <property type="taxonomic scope" value="Bacteria"/>
</dbReference>
<dbReference type="HOGENOM" id="CLU_027480_0_1_6"/>
<dbReference type="InParanoid" id="P77774"/>
<dbReference type="OMA" id="FTPTKVW"/>
<dbReference type="OrthoDB" id="5173551at2"/>
<dbReference type="PhylomeDB" id="P77774"/>
<dbReference type="BioCyc" id="EcoCyc:G7320-MONOMER"/>
<dbReference type="EvolutionaryTrace" id="P77774"/>
<dbReference type="PRO" id="PR:P77774"/>
<dbReference type="Proteomes" id="UP000000625">
    <property type="component" value="Chromosome"/>
</dbReference>
<dbReference type="GO" id="GO:1990063">
    <property type="term" value="C:Bam protein complex"/>
    <property type="evidence" value="ECO:0000314"/>
    <property type="project" value="EcoCyc"/>
</dbReference>
<dbReference type="GO" id="GO:0009279">
    <property type="term" value="C:cell outer membrane"/>
    <property type="evidence" value="ECO:0000314"/>
    <property type="project" value="EcoCyc"/>
</dbReference>
<dbReference type="GO" id="GO:0016020">
    <property type="term" value="C:membrane"/>
    <property type="evidence" value="ECO:0000314"/>
    <property type="project" value="ComplexPortal"/>
</dbReference>
<dbReference type="GO" id="GO:0042802">
    <property type="term" value="F:identical protein binding"/>
    <property type="evidence" value="ECO:0000353"/>
    <property type="project" value="IntAct"/>
</dbReference>
<dbReference type="GO" id="GO:0043165">
    <property type="term" value="P:Gram-negative-bacterium-type cell outer membrane assembly"/>
    <property type="evidence" value="ECO:0000314"/>
    <property type="project" value="ComplexPortal"/>
</dbReference>
<dbReference type="GO" id="GO:0051205">
    <property type="term" value="P:protein insertion into membrane"/>
    <property type="evidence" value="ECO:0000314"/>
    <property type="project" value="ComplexPortal"/>
</dbReference>
<dbReference type="CDD" id="cd00216">
    <property type="entry name" value="PQQ_DH_like"/>
    <property type="match status" value="1"/>
</dbReference>
<dbReference type="FunFam" id="2.130.10.10:FF:000125">
    <property type="entry name" value="Outer membrane protein assembly factor BamB"/>
    <property type="match status" value="1"/>
</dbReference>
<dbReference type="Gene3D" id="2.130.10.10">
    <property type="entry name" value="YVTN repeat-like/Quinoprotein amine dehydrogenase"/>
    <property type="match status" value="1"/>
</dbReference>
<dbReference type="HAMAP" id="MF_00923">
    <property type="entry name" value="OM_assembly_BamB"/>
    <property type="match status" value="1"/>
</dbReference>
<dbReference type="InterPro" id="IPR017687">
    <property type="entry name" value="BamB"/>
</dbReference>
<dbReference type="InterPro" id="IPR018391">
    <property type="entry name" value="PQQ_b-propeller_rpt"/>
</dbReference>
<dbReference type="InterPro" id="IPR002372">
    <property type="entry name" value="PQQ_rpt_dom"/>
</dbReference>
<dbReference type="InterPro" id="IPR011047">
    <property type="entry name" value="Quinoprotein_ADH-like_sf"/>
</dbReference>
<dbReference type="InterPro" id="IPR015943">
    <property type="entry name" value="WD40/YVTN_repeat-like_dom_sf"/>
</dbReference>
<dbReference type="NCBIfam" id="TIGR03300">
    <property type="entry name" value="assembly_YfgL"/>
    <property type="match status" value="1"/>
</dbReference>
<dbReference type="NCBIfam" id="NF008351">
    <property type="entry name" value="PRK11138.1"/>
    <property type="match status" value="1"/>
</dbReference>
<dbReference type="PANTHER" id="PTHR34512">
    <property type="entry name" value="CELL SURFACE PROTEIN"/>
    <property type="match status" value="1"/>
</dbReference>
<dbReference type="PANTHER" id="PTHR34512:SF30">
    <property type="entry name" value="OUTER MEMBRANE PROTEIN ASSEMBLY FACTOR BAMB"/>
    <property type="match status" value="1"/>
</dbReference>
<dbReference type="Pfam" id="PF13360">
    <property type="entry name" value="PQQ_2"/>
    <property type="match status" value="1"/>
</dbReference>
<dbReference type="SMART" id="SM00564">
    <property type="entry name" value="PQQ"/>
    <property type="match status" value="7"/>
</dbReference>
<dbReference type="SUPFAM" id="SSF50998">
    <property type="entry name" value="Quinoprotein alcohol dehydrogenase-like"/>
    <property type="match status" value="1"/>
</dbReference>
<dbReference type="PROSITE" id="PS51257">
    <property type="entry name" value="PROKAR_LIPOPROTEIN"/>
    <property type="match status" value="1"/>
</dbReference>
<proteinExistence type="evidence at protein level"/>